<sequence>MTSLSRPRVEFISTILQTVLNLGLLCLGLILVVFLGKETVHLADVLFAPEQTSKYELVEGLVVYFLYFEFIALIVKYFQSGFHFPLRYFVYIGITAIVRLIIVDHKSPLDVLIYSAAILLLVITLWLCNSKRLKRE</sequence>
<proteinExistence type="inferred from homology"/>
<dbReference type="EMBL" id="CP000802">
    <property type="protein sequence ID" value="ABV08434.1"/>
    <property type="molecule type" value="Genomic_DNA"/>
</dbReference>
<dbReference type="RefSeq" id="WP_000202902.1">
    <property type="nucleotide sequence ID" value="NC_009800.1"/>
</dbReference>
<dbReference type="SMR" id="A8A7D0"/>
<dbReference type="GeneID" id="93777857"/>
<dbReference type="KEGG" id="ecx:EcHS_A4270"/>
<dbReference type="HOGENOM" id="CLU_127561_0_1_6"/>
<dbReference type="GO" id="GO:0005886">
    <property type="term" value="C:plasma membrane"/>
    <property type="evidence" value="ECO:0007669"/>
    <property type="project" value="UniProtKB-SubCell"/>
</dbReference>
<dbReference type="GO" id="GO:0016036">
    <property type="term" value="P:cellular response to phosphate starvation"/>
    <property type="evidence" value="ECO:0007669"/>
    <property type="project" value="InterPro"/>
</dbReference>
<dbReference type="HAMAP" id="MF_01048">
    <property type="entry name" value="PsiE"/>
    <property type="match status" value="1"/>
</dbReference>
<dbReference type="InterPro" id="IPR009315">
    <property type="entry name" value="P_starv_induced_PsiE"/>
</dbReference>
<dbReference type="InterPro" id="IPR020948">
    <property type="entry name" value="P_starv_induced_PsiE-like"/>
</dbReference>
<dbReference type="NCBIfam" id="NF002764">
    <property type="entry name" value="PRK02833.1-2"/>
    <property type="match status" value="1"/>
</dbReference>
<dbReference type="NCBIfam" id="NF002765">
    <property type="entry name" value="PRK02833.1-3"/>
    <property type="match status" value="1"/>
</dbReference>
<dbReference type="NCBIfam" id="NF002767">
    <property type="entry name" value="PRK02833.1-5"/>
    <property type="match status" value="1"/>
</dbReference>
<dbReference type="PANTHER" id="PTHR37819">
    <property type="entry name" value="PROTEIN PSIE"/>
    <property type="match status" value="1"/>
</dbReference>
<dbReference type="PANTHER" id="PTHR37819:SF1">
    <property type="entry name" value="PROTEIN PSIE"/>
    <property type="match status" value="1"/>
</dbReference>
<dbReference type="Pfam" id="PF06146">
    <property type="entry name" value="PsiE"/>
    <property type="match status" value="1"/>
</dbReference>
<dbReference type="PIRSF" id="PIRSF029598">
    <property type="entry name" value="PsiE"/>
    <property type="match status" value="1"/>
</dbReference>
<reference key="1">
    <citation type="journal article" date="2008" name="J. Bacteriol.">
        <title>The pangenome structure of Escherichia coli: comparative genomic analysis of E. coli commensal and pathogenic isolates.</title>
        <authorList>
            <person name="Rasko D.A."/>
            <person name="Rosovitz M.J."/>
            <person name="Myers G.S.A."/>
            <person name="Mongodin E.F."/>
            <person name="Fricke W.F."/>
            <person name="Gajer P."/>
            <person name="Crabtree J."/>
            <person name="Sebaihia M."/>
            <person name="Thomson N.R."/>
            <person name="Chaudhuri R."/>
            <person name="Henderson I.R."/>
            <person name="Sperandio V."/>
            <person name="Ravel J."/>
        </authorList>
    </citation>
    <scope>NUCLEOTIDE SEQUENCE [LARGE SCALE GENOMIC DNA]</scope>
    <source>
        <strain>HS</strain>
    </source>
</reference>
<comment type="subcellular location">
    <subcellularLocation>
        <location evidence="1">Cell inner membrane</location>
        <topology evidence="1">Multi-pass membrane protein</topology>
    </subcellularLocation>
</comment>
<comment type="similarity">
    <text evidence="1">Belongs to the PsiE family.</text>
</comment>
<keyword id="KW-0997">Cell inner membrane</keyword>
<keyword id="KW-1003">Cell membrane</keyword>
<keyword id="KW-0472">Membrane</keyword>
<keyword id="KW-0812">Transmembrane</keyword>
<keyword id="KW-1133">Transmembrane helix</keyword>
<protein>
    <recommendedName>
        <fullName evidence="1">Protein PsiE</fullName>
    </recommendedName>
</protein>
<name>PSIE_ECOHS</name>
<gene>
    <name evidence="1" type="primary">psiE</name>
    <name type="ordered locus">EcHS_A4270</name>
</gene>
<accession>A8A7D0</accession>
<feature type="chain" id="PRO_1000064311" description="Protein PsiE">
    <location>
        <begin position="1"/>
        <end position="136"/>
    </location>
</feature>
<feature type="transmembrane region" description="Helical" evidence="1">
    <location>
        <begin position="15"/>
        <end position="35"/>
    </location>
</feature>
<feature type="transmembrane region" description="Helical" evidence="1">
    <location>
        <begin position="55"/>
        <end position="75"/>
    </location>
</feature>
<feature type="transmembrane region" description="Helical" evidence="1">
    <location>
        <begin position="82"/>
        <end position="102"/>
    </location>
</feature>
<feature type="transmembrane region" description="Helical" evidence="1">
    <location>
        <begin position="108"/>
        <end position="128"/>
    </location>
</feature>
<organism>
    <name type="scientific">Escherichia coli O9:H4 (strain HS)</name>
    <dbReference type="NCBI Taxonomy" id="331112"/>
    <lineage>
        <taxon>Bacteria</taxon>
        <taxon>Pseudomonadati</taxon>
        <taxon>Pseudomonadota</taxon>
        <taxon>Gammaproteobacteria</taxon>
        <taxon>Enterobacterales</taxon>
        <taxon>Enterobacteriaceae</taxon>
        <taxon>Escherichia</taxon>
    </lineage>
</organism>
<evidence type="ECO:0000255" key="1">
    <source>
        <dbReference type="HAMAP-Rule" id="MF_01048"/>
    </source>
</evidence>